<keyword id="KW-0067">ATP-binding</keyword>
<keyword id="KW-0418">Kinase</keyword>
<keyword id="KW-0460">Magnesium</keyword>
<keyword id="KW-0479">Metal-binding</keyword>
<keyword id="KW-0547">Nucleotide-binding</keyword>
<keyword id="KW-0784">Thiamine biosynthesis</keyword>
<keyword id="KW-0808">Transferase</keyword>
<reference key="1">
    <citation type="journal article" date="2007" name="J. Bacteriol.">
        <title>The complete genome sequence of Bacillus thuringiensis Al Hakam.</title>
        <authorList>
            <person name="Challacombe J.F."/>
            <person name="Altherr M.R."/>
            <person name="Xie G."/>
            <person name="Bhotika S.S."/>
            <person name="Brown N."/>
            <person name="Bruce D."/>
            <person name="Campbell C.S."/>
            <person name="Campbell M.L."/>
            <person name="Chen J."/>
            <person name="Chertkov O."/>
            <person name="Cleland C."/>
            <person name="Dimitrijevic M."/>
            <person name="Doggett N.A."/>
            <person name="Fawcett J.J."/>
            <person name="Glavina T."/>
            <person name="Goodwin L.A."/>
            <person name="Green L.D."/>
            <person name="Han C.S."/>
            <person name="Hill K.K."/>
            <person name="Hitchcock P."/>
            <person name="Jackson P.J."/>
            <person name="Keim P."/>
            <person name="Kewalramani A.R."/>
            <person name="Longmire J."/>
            <person name="Lucas S."/>
            <person name="Malfatti S."/>
            <person name="Martinez D."/>
            <person name="McMurry K."/>
            <person name="Meincke L.J."/>
            <person name="Misra M."/>
            <person name="Moseman B.L."/>
            <person name="Mundt M."/>
            <person name="Munk A.C."/>
            <person name="Okinaka R.T."/>
            <person name="Parson-Quintana B."/>
            <person name="Reilly L.P."/>
            <person name="Richardson P."/>
            <person name="Robinson D.L."/>
            <person name="Saunders E."/>
            <person name="Tapia R."/>
            <person name="Tesmer J.G."/>
            <person name="Thayer N."/>
            <person name="Thompson L.S."/>
            <person name="Tice H."/>
            <person name="Ticknor L.O."/>
            <person name="Wills P.L."/>
            <person name="Gilna P."/>
            <person name="Brettin T.S."/>
        </authorList>
    </citation>
    <scope>NUCLEOTIDE SEQUENCE [LARGE SCALE GENOMIC DNA]</scope>
    <source>
        <strain>Al Hakam</strain>
    </source>
</reference>
<name>THIM_BACAH</name>
<sequence>MNMKEISKVVDLVRESNPLVHNITNVVVTNFTANGLLALGASPVMAYAKEEVAEMASIAGALVLNMGTLRPDEVEAMLLAGKSANRNDVPVLFDPVGAGATSYRTEVARHIPAEIELAIIRGNAAEIANVINEKWEIKGVDAGAGNGNVVSIAKQAADELNTVAVITGKEDVVTDGERTIVIRNGHSILTKITGTGCLLTSVIGAFVAVEKDYVKAAVAALTFYGVAAELAAAKTVEKGPGSFQIEFLNQLANTTSGDIEKYGKIEVI</sequence>
<evidence type="ECO:0000255" key="1">
    <source>
        <dbReference type="HAMAP-Rule" id="MF_00228"/>
    </source>
</evidence>
<evidence type="ECO:0000305" key="2"/>
<feature type="chain" id="PRO_0000336546" description="Hydroxyethylthiazole kinase">
    <location>
        <begin position="1"/>
        <end position="268"/>
    </location>
</feature>
<feature type="binding site" evidence="1">
    <location>
        <position position="45"/>
    </location>
    <ligand>
        <name>substrate</name>
    </ligand>
</feature>
<feature type="binding site" evidence="1">
    <location>
        <position position="121"/>
    </location>
    <ligand>
        <name>ATP</name>
        <dbReference type="ChEBI" id="CHEBI:30616"/>
    </ligand>
</feature>
<feature type="binding site" evidence="1">
    <location>
        <position position="167"/>
    </location>
    <ligand>
        <name>ATP</name>
        <dbReference type="ChEBI" id="CHEBI:30616"/>
    </ligand>
</feature>
<feature type="binding site" evidence="1">
    <location>
        <position position="194"/>
    </location>
    <ligand>
        <name>substrate</name>
    </ligand>
</feature>
<gene>
    <name evidence="1" type="primary">thiM</name>
    <name type="ordered locus">BALH_0374</name>
</gene>
<organism>
    <name type="scientific">Bacillus thuringiensis (strain Al Hakam)</name>
    <dbReference type="NCBI Taxonomy" id="412694"/>
    <lineage>
        <taxon>Bacteria</taxon>
        <taxon>Bacillati</taxon>
        <taxon>Bacillota</taxon>
        <taxon>Bacilli</taxon>
        <taxon>Bacillales</taxon>
        <taxon>Bacillaceae</taxon>
        <taxon>Bacillus</taxon>
        <taxon>Bacillus cereus group</taxon>
    </lineage>
</organism>
<proteinExistence type="inferred from homology"/>
<protein>
    <recommendedName>
        <fullName evidence="1">Hydroxyethylthiazole kinase</fullName>
        <ecNumber evidence="1">2.7.1.50</ecNumber>
    </recommendedName>
    <alternativeName>
        <fullName evidence="1">4-methyl-5-beta-hydroxyethylthiazole kinase</fullName>
        <shortName evidence="1">TH kinase</shortName>
        <shortName evidence="1">Thz kinase</shortName>
    </alternativeName>
</protein>
<comment type="function">
    <text evidence="1">Catalyzes the phosphorylation of the hydroxyl group of 4-methyl-5-beta-hydroxyethylthiazole (THZ).</text>
</comment>
<comment type="catalytic activity">
    <reaction evidence="1">
        <text>5-(2-hydroxyethyl)-4-methylthiazole + ATP = 4-methyl-5-(2-phosphooxyethyl)-thiazole + ADP + H(+)</text>
        <dbReference type="Rhea" id="RHEA:24212"/>
        <dbReference type="ChEBI" id="CHEBI:15378"/>
        <dbReference type="ChEBI" id="CHEBI:17957"/>
        <dbReference type="ChEBI" id="CHEBI:30616"/>
        <dbReference type="ChEBI" id="CHEBI:58296"/>
        <dbReference type="ChEBI" id="CHEBI:456216"/>
        <dbReference type="EC" id="2.7.1.50"/>
    </reaction>
</comment>
<comment type="cofactor">
    <cofactor evidence="1">
        <name>Mg(2+)</name>
        <dbReference type="ChEBI" id="CHEBI:18420"/>
    </cofactor>
</comment>
<comment type="pathway">
    <text evidence="1">Cofactor biosynthesis; thiamine diphosphate biosynthesis; 4-methyl-5-(2-phosphoethyl)-thiazole from 5-(2-hydroxyethyl)-4-methylthiazole: step 1/1.</text>
</comment>
<comment type="similarity">
    <text evidence="1">Belongs to the Thz kinase family.</text>
</comment>
<comment type="sequence caution" evidence="2">
    <conflict type="erroneous initiation">
        <sequence resource="EMBL-CDS" id="ABK83773"/>
    </conflict>
</comment>
<accession>A0R980</accession>
<dbReference type="EC" id="2.7.1.50" evidence="1"/>
<dbReference type="EMBL" id="CP000485">
    <property type="protein sequence ID" value="ABK83773.1"/>
    <property type="status" value="ALT_INIT"/>
    <property type="molecule type" value="Genomic_DNA"/>
</dbReference>
<dbReference type="RefSeq" id="WP_001056087.1">
    <property type="nucleotide sequence ID" value="NC_008600.1"/>
</dbReference>
<dbReference type="SMR" id="A0R980"/>
<dbReference type="KEGG" id="btl:BALH_0374"/>
<dbReference type="HOGENOM" id="CLU_019943_0_1_9"/>
<dbReference type="UniPathway" id="UPA00060">
    <property type="reaction ID" value="UER00139"/>
</dbReference>
<dbReference type="GO" id="GO:0005524">
    <property type="term" value="F:ATP binding"/>
    <property type="evidence" value="ECO:0007669"/>
    <property type="project" value="UniProtKB-UniRule"/>
</dbReference>
<dbReference type="GO" id="GO:0004417">
    <property type="term" value="F:hydroxyethylthiazole kinase activity"/>
    <property type="evidence" value="ECO:0007669"/>
    <property type="project" value="UniProtKB-UniRule"/>
</dbReference>
<dbReference type="GO" id="GO:0000287">
    <property type="term" value="F:magnesium ion binding"/>
    <property type="evidence" value="ECO:0007669"/>
    <property type="project" value="UniProtKB-UniRule"/>
</dbReference>
<dbReference type="GO" id="GO:0009228">
    <property type="term" value="P:thiamine biosynthetic process"/>
    <property type="evidence" value="ECO:0007669"/>
    <property type="project" value="UniProtKB-KW"/>
</dbReference>
<dbReference type="GO" id="GO:0009229">
    <property type="term" value="P:thiamine diphosphate biosynthetic process"/>
    <property type="evidence" value="ECO:0007669"/>
    <property type="project" value="UniProtKB-UniRule"/>
</dbReference>
<dbReference type="CDD" id="cd01170">
    <property type="entry name" value="THZ_kinase"/>
    <property type="match status" value="1"/>
</dbReference>
<dbReference type="FunFam" id="3.40.1190.20:FF:000027">
    <property type="entry name" value="Hydroxyethylthiazole kinase"/>
    <property type="match status" value="1"/>
</dbReference>
<dbReference type="Gene3D" id="3.40.1190.20">
    <property type="match status" value="1"/>
</dbReference>
<dbReference type="HAMAP" id="MF_00228">
    <property type="entry name" value="Thz_kinase"/>
    <property type="match status" value="1"/>
</dbReference>
<dbReference type="InterPro" id="IPR000417">
    <property type="entry name" value="Hyethyz_kinase"/>
</dbReference>
<dbReference type="InterPro" id="IPR029056">
    <property type="entry name" value="Ribokinase-like"/>
</dbReference>
<dbReference type="NCBIfam" id="NF006830">
    <property type="entry name" value="PRK09355.1"/>
    <property type="match status" value="1"/>
</dbReference>
<dbReference type="NCBIfam" id="TIGR00694">
    <property type="entry name" value="thiM"/>
    <property type="match status" value="1"/>
</dbReference>
<dbReference type="Pfam" id="PF02110">
    <property type="entry name" value="HK"/>
    <property type="match status" value="1"/>
</dbReference>
<dbReference type="PIRSF" id="PIRSF000513">
    <property type="entry name" value="Thz_kinase"/>
    <property type="match status" value="1"/>
</dbReference>
<dbReference type="PRINTS" id="PR01099">
    <property type="entry name" value="HYETHTZKNASE"/>
</dbReference>
<dbReference type="SUPFAM" id="SSF53613">
    <property type="entry name" value="Ribokinase-like"/>
    <property type="match status" value="1"/>
</dbReference>